<organism>
    <name type="scientific">Xanthomonas oryzae pv. oryzae (strain MAFF 311018)</name>
    <dbReference type="NCBI Taxonomy" id="342109"/>
    <lineage>
        <taxon>Bacteria</taxon>
        <taxon>Pseudomonadati</taxon>
        <taxon>Pseudomonadota</taxon>
        <taxon>Gammaproteobacteria</taxon>
        <taxon>Lysobacterales</taxon>
        <taxon>Lysobacteraceae</taxon>
        <taxon>Xanthomonas</taxon>
    </lineage>
</organism>
<evidence type="ECO:0000255" key="1">
    <source>
        <dbReference type="HAMAP-Rule" id="MF_02002"/>
    </source>
</evidence>
<gene>
    <name evidence="1" type="primary">ileS</name>
    <name type="ordered locus">XOO1512</name>
</gene>
<comment type="function">
    <text evidence="1">Catalyzes the attachment of isoleucine to tRNA(Ile). As IleRS can inadvertently accommodate and process structurally similar amino acids such as valine, to avoid such errors it has two additional distinct tRNA(Ile)-dependent editing activities. One activity is designated as 'pretransfer' editing and involves the hydrolysis of activated Val-AMP. The other activity is designated 'posttransfer' editing and involves deacylation of mischarged Val-tRNA(Ile).</text>
</comment>
<comment type="catalytic activity">
    <reaction evidence="1">
        <text>tRNA(Ile) + L-isoleucine + ATP = L-isoleucyl-tRNA(Ile) + AMP + diphosphate</text>
        <dbReference type="Rhea" id="RHEA:11060"/>
        <dbReference type="Rhea" id="RHEA-COMP:9666"/>
        <dbReference type="Rhea" id="RHEA-COMP:9695"/>
        <dbReference type="ChEBI" id="CHEBI:30616"/>
        <dbReference type="ChEBI" id="CHEBI:33019"/>
        <dbReference type="ChEBI" id="CHEBI:58045"/>
        <dbReference type="ChEBI" id="CHEBI:78442"/>
        <dbReference type="ChEBI" id="CHEBI:78528"/>
        <dbReference type="ChEBI" id="CHEBI:456215"/>
        <dbReference type="EC" id="6.1.1.5"/>
    </reaction>
</comment>
<comment type="cofactor">
    <cofactor evidence="1">
        <name>Zn(2+)</name>
        <dbReference type="ChEBI" id="CHEBI:29105"/>
    </cofactor>
    <text evidence="1">Binds 1 zinc ion per subunit.</text>
</comment>
<comment type="subunit">
    <text evidence="1">Monomer.</text>
</comment>
<comment type="subcellular location">
    <subcellularLocation>
        <location evidence="1">Cytoplasm</location>
    </subcellularLocation>
</comment>
<comment type="domain">
    <text evidence="1">IleRS has two distinct active sites: one for aminoacylation and one for editing. The misactivated valine is translocated from the active site to the editing site, which sterically excludes the correctly activated isoleucine. The single editing site contains two valyl binding pockets, one specific for each substrate (Val-AMP or Val-tRNA(Ile)).</text>
</comment>
<comment type="similarity">
    <text evidence="1">Belongs to the class-I aminoacyl-tRNA synthetase family. IleS type 1 subfamily.</text>
</comment>
<accession>Q2P5B0</accession>
<name>SYI_XANOM</name>
<reference key="1">
    <citation type="journal article" date="2005" name="Jpn. Agric. Res. Q.">
        <title>Genome sequence of Xanthomonas oryzae pv. oryzae suggests contribution of large numbers of effector genes and insertion sequences to its race diversity.</title>
        <authorList>
            <person name="Ochiai H."/>
            <person name="Inoue Y."/>
            <person name="Takeya M."/>
            <person name="Sasaki A."/>
            <person name="Kaku H."/>
        </authorList>
    </citation>
    <scope>NUCLEOTIDE SEQUENCE [LARGE SCALE GENOMIC DNA]</scope>
    <source>
        <strain>MAFF 311018</strain>
    </source>
</reference>
<proteinExistence type="inferred from homology"/>
<protein>
    <recommendedName>
        <fullName evidence="1">Isoleucine--tRNA ligase</fullName>
        <ecNumber evidence="1">6.1.1.5</ecNumber>
    </recommendedName>
    <alternativeName>
        <fullName evidence="1">Isoleucyl-tRNA synthetase</fullName>
        <shortName evidence="1">IleRS</shortName>
    </alternativeName>
</protein>
<dbReference type="EC" id="6.1.1.5" evidence="1"/>
<dbReference type="EMBL" id="AP008229">
    <property type="protein sequence ID" value="BAE68267.1"/>
    <property type="molecule type" value="Genomic_DNA"/>
</dbReference>
<dbReference type="RefSeq" id="WP_011258399.1">
    <property type="nucleotide sequence ID" value="NC_007705.1"/>
</dbReference>
<dbReference type="SMR" id="Q2P5B0"/>
<dbReference type="KEGG" id="xom:XOO1512"/>
<dbReference type="HOGENOM" id="CLU_001493_7_1_6"/>
<dbReference type="GO" id="GO:0005829">
    <property type="term" value="C:cytosol"/>
    <property type="evidence" value="ECO:0007669"/>
    <property type="project" value="TreeGrafter"/>
</dbReference>
<dbReference type="GO" id="GO:0002161">
    <property type="term" value="F:aminoacyl-tRNA deacylase activity"/>
    <property type="evidence" value="ECO:0007669"/>
    <property type="project" value="InterPro"/>
</dbReference>
<dbReference type="GO" id="GO:0005524">
    <property type="term" value="F:ATP binding"/>
    <property type="evidence" value="ECO:0007669"/>
    <property type="project" value="UniProtKB-UniRule"/>
</dbReference>
<dbReference type="GO" id="GO:0004822">
    <property type="term" value="F:isoleucine-tRNA ligase activity"/>
    <property type="evidence" value="ECO:0007669"/>
    <property type="project" value="UniProtKB-UniRule"/>
</dbReference>
<dbReference type="GO" id="GO:0000049">
    <property type="term" value="F:tRNA binding"/>
    <property type="evidence" value="ECO:0007669"/>
    <property type="project" value="InterPro"/>
</dbReference>
<dbReference type="GO" id="GO:0008270">
    <property type="term" value="F:zinc ion binding"/>
    <property type="evidence" value="ECO:0007669"/>
    <property type="project" value="UniProtKB-UniRule"/>
</dbReference>
<dbReference type="GO" id="GO:0006428">
    <property type="term" value="P:isoleucyl-tRNA aminoacylation"/>
    <property type="evidence" value="ECO:0007669"/>
    <property type="project" value="UniProtKB-UniRule"/>
</dbReference>
<dbReference type="CDD" id="cd07960">
    <property type="entry name" value="Anticodon_Ia_Ile_BEm"/>
    <property type="match status" value="1"/>
</dbReference>
<dbReference type="FunFam" id="1.10.730.20:FF:000001">
    <property type="entry name" value="Isoleucine--tRNA ligase"/>
    <property type="match status" value="1"/>
</dbReference>
<dbReference type="FunFam" id="3.40.50.620:FF:000042">
    <property type="entry name" value="Isoleucine--tRNA ligase"/>
    <property type="match status" value="1"/>
</dbReference>
<dbReference type="FunFam" id="3.40.50.620:FF:000048">
    <property type="entry name" value="Isoleucine--tRNA ligase"/>
    <property type="match status" value="1"/>
</dbReference>
<dbReference type="FunFam" id="3.90.740.10:FF:000022">
    <property type="entry name" value="Isoleucine--tRNA ligase"/>
    <property type="match status" value="1"/>
</dbReference>
<dbReference type="Gene3D" id="1.10.730.20">
    <property type="match status" value="1"/>
</dbReference>
<dbReference type="Gene3D" id="3.40.50.620">
    <property type="entry name" value="HUPs"/>
    <property type="match status" value="2"/>
</dbReference>
<dbReference type="Gene3D" id="3.90.740.10">
    <property type="entry name" value="Valyl/Leucyl/Isoleucyl-tRNA synthetase, editing domain"/>
    <property type="match status" value="1"/>
</dbReference>
<dbReference type="HAMAP" id="MF_02002">
    <property type="entry name" value="Ile_tRNA_synth_type1"/>
    <property type="match status" value="1"/>
</dbReference>
<dbReference type="InterPro" id="IPR001412">
    <property type="entry name" value="aa-tRNA-synth_I_CS"/>
</dbReference>
<dbReference type="InterPro" id="IPR002300">
    <property type="entry name" value="aa-tRNA-synth_Ia"/>
</dbReference>
<dbReference type="InterPro" id="IPR033708">
    <property type="entry name" value="Anticodon_Ile_BEm"/>
</dbReference>
<dbReference type="InterPro" id="IPR002301">
    <property type="entry name" value="Ile-tRNA-ligase"/>
</dbReference>
<dbReference type="InterPro" id="IPR023585">
    <property type="entry name" value="Ile-tRNA-ligase_type1"/>
</dbReference>
<dbReference type="InterPro" id="IPR050081">
    <property type="entry name" value="Ile-tRNA_ligase"/>
</dbReference>
<dbReference type="InterPro" id="IPR013155">
    <property type="entry name" value="M/V/L/I-tRNA-synth_anticd-bd"/>
</dbReference>
<dbReference type="InterPro" id="IPR014729">
    <property type="entry name" value="Rossmann-like_a/b/a_fold"/>
</dbReference>
<dbReference type="InterPro" id="IPR009080">
    <property type="entry name" value="tRNAsynth_Ia_anticodon-bd"/>
</dbReference>
<dbReference type="InterPro" id="IPR009008">
    <property type="entry name" value="Val/Leu/Ile-tRNA-synth_edit"/>
</dbReference>
<dbReference type="InterPro" id="IPR010663">
    <property type="entry name" value="Znf_FPG/IleRS"/>
</dbReference>
<dbReference type="NCBIfam" id="TIGR00392">
    <property type="entry name" value="ileS"/>
    <property type="match status" value="1"/>
</dbReference>
<dbReference type="PANTHER" id="PTHR42765:SF1">
    <property type="entry name" value="ISOLEUCINE--TRNA LIGASE, MITOCHONDRIAL"/>
    <property type="match status" value="1"/>
</dbReference>
<dbReference type="PANTHER" id="PTHR42765">
    <property type="entry name" value="SOLEUCYL-TRNA SYNTHETASE"/>
    <property type="match status" value="1"/>
</dbReference>
<dbReference type="Pfam" id="PF08264">
    <property type="entry name" value="Anticodon_1"/>
    <property type="match status" value="1"/>
</dbReference>
<dbReference type="Pfam" id="PF00133">
    <property type="entry name" value="tRNA-synt_1"/>
    <property type="match status" value="1"/>
</dbReference>
<dbReference type="Pfam" id="PF06827">
    <property type="entry name" value="zf-FPG_IleRS"/>
    <property type="match status" value="1"/>
</dbReference>
<dbReference type="PRINTS" id="PR00984">
    <property type="entry name" value="TRNASYNTHILE"/>
</dbReference>
<dbReference type="SUPFAM" id="SSF47323">
    <property type="entry name" value="Anticodon-binding domain of a subclass of class I aminoacyl-tRNA synthetases"/>
    <property type="match status" value="1"/>
</dbReference>
<dbReference type="SUPFAM" id="SSF52374">
    <property type="entry name" value="Nucleotidylyl transferase"/>
    <property type="match status" value="1"/>
</dbReference>
<dbReference type="SUPFAM" id="SSF50677">
    <property type="entry name" value="ValRS/IleRS/LeuRS editing domain"/>
    <property type="match status" value="1"/>
</dbReference>
<dbReference type="PROSITE" id="PS00178">
    <property type="entry name" value="AA_TRNA_LIGASE_I"/>
    <property type="match status" value="1"/>
</dbReference>
<sequence>MTQDYKATLHLPATEFPMRGDLPKREPAMLERWEREGFYAQLRANAAGRPLFVLHDGPPYANGQIHLGHAVNKILKDIIVKSKCLAGFDAPYIPGWDCHGLPIEIAIEKKYGKVGVKLDAAEFRQKCREYATEQIDLQRRDFKRLGVIGDWDNPYKTLDFRFEANEIRALAKVVDNGHLTRGVKPVHWCFDCGSALAEAEIEYADKVSPTVDIAYPARDPGAVAAAFGATLPGGVGVAVPIWTTTPWTLPASLAVSLGAELDYVLVEGPADRGQPRWLVIAEALAAKALARYGVDEVVVHGHAKGTALEQMLLNHPFYAEREIPLLLGDHVSAEDGTGAVHTAPGHGQEDYQVSKQYGLLERYGAAQINPVDGRGVYLPSTPPLGDTVLAGLHIWKANDVIIEALHGTGVLLAASKMEHSYPHCWRHKTPIAFRATPQWFISMEQANLRADALKAIESVHWYPSWGQARIAGMVDGRPDWTISRQRTWGVPIALFVHRETGEPHPRSTELLRQVADRVELGGVDVWYTLDAAELLGDEAADYDKITDILDVWFDSGVTHEAVLVDRGLPKPADLYLEGSDQHRGWFQSSLLSGVAMDKAAPYKQCLTHGFTVDEHGRKMSKSLGNGIEPQDIMKTLGADILRLWIASADYSNEMSLSQEILKRNADAYRRLRNTARFLLGNLHGFDPLQHLVALEDMVLLDRWIVHRAHELQEKIVAAYARYDFAEIVQALLNFCSVDLGSLYLDVTKDRLYTMAEDARGRRSAQSAMYHVAEAFVRWIAPVMSFTADELWGYLPGKHVGNVLFATWYGGLAPLPADAALTSADFDKLLALREQVSKVLEPMRANGAIGAALEAEITVAADVQTAARWQPLAEELRFLFISGDVTVTAASTDDIFVSAQPTTKAKCVRCWHHQSSVGSDPRHPELCSRCVSNIEGPGEERRWF</sequence>
<keyword id="KW-0030">Aminoacyl-tRNA synthetase</keyword>
<keyword id="KW-0067">ATP-binding</keyword>
<keyword id="KW-0963">Cytoplasm</keyword>
<keyword id="KW-0436">Ligase</keyword>
<keyword id="KW-0479">Metal-binding</keyword>
<keyword id="KW-0547">Nucleotide-binding</keyword>
<keyword id="KW-0648">Protein biosynthesis</keyword>
<keyword id="KW-0862">Zinc</keyword>
<feature type="chain" id="PRO_1000022142" description="Isoleucine--tRNA ligase">
    <location>
        <begin position="1"/>
        <end position="943"/>
    </location>
</feature>
<feature type="short sequence motif" description="'HIGH' region">
    <location>
        <begin position="59"/>
        <end position="69"/>
    </location>
</feature>
<feature type="short sequence motif" description="'KMSKS' region">
    <location>
        <begin position="618"/>
        <end position="622"/>
    </location>
</feature>
<feature type="binding site" evidence="1">
    <location>
        <position position="577"/>
    </location>
    <ligand>
        <name>L-isoleucyl-5'-AMP</name>
        <dbReference type="ChEBI" id="CHEBI:178002"/>
    </ligand>
</feature>
<feature type="binding site" evidence="1">
    <location>
        <position position="621"/>
    </location>
    <ligand>
        <name>ATP</name>
        <dbReference type="ChEBI" id="CHEBI:30616"/>
    </ligand>
</feature>
<feature type="binding site" evidence="1">
    <location>
        <position position="906"/>
    </location>
    <ligand>
        <name>Zn(2+)</name>
        <dbReference type="ChEBI" id="CHEBI:29105"/>
    </ligand>
</feature>
<feature type="binding site" evidence="1">
    <location>
        <position position="909"/>
    </location>
    <ligand>
        <name>Zn(2+)</name>
        <dbReference type="ChEBI" id="CHEBI:29105"/>
    </ligand>
</feature>
<feature type="binding site" evidence="1">
    <location>
        <position position="926"/>
    </location>
    <ligand>
        <name>Zn(2+)</name>
        <dbReference type="ChEBI" id="CHEBI:29105"/>
    </ligand>
</feature>
<feature type="binding site" evidence="1">
    <location>
        <position position="929"/>
    </location>
    <ligand>
        <name>Zn(2+)</name>
        <dbReference type="ChEBI" id="CHEBI:29105"/>
    </ligand>
</feature>